<comment type="function">
    <text evidence="2">Inositol 1,4,5-trisphosphate-gated calcium channel that, upon 1D-myo-inositol 1,4,5-trisphosphate binding, transports calcium from the endoplasmic reticulum lumen to cytoplasm, thus releasing the intracellular calcium and therefore participates in cellular calcium ion homeostasis (By similarity). 11D-myo-inositol 1,4,5-trisphosphate binds to the ligand-free channel without altering its global conformation, yielding the low-energy resting state, then progresses through resting-to preactivated transitions to the higher energy preactivated state, which increases affinity for calcium, promoting binding of the low basal cytosolic calcium at the juxtamembrane domain (JD) site, favoring the transition through the ensemble of high-energy intermediate states along the trajectory to the fully-open activated state (By similarity). Upon opening, releases calcium in the cytosol where it can bind to the low-affinity cytoplasmic domain (CD) site and stabilizes the inhibited state to terminate calcium release (By similarity).</text>
</comment>
<comment type="catalytic activity">
    <reaction evidence="2">
        <text>Ca(2+)(in) = Ca(2+)(out)</text>
        <dbReference type="Rhea" id="RHEA:29671"/>
        <dbReference type="ChEBI" id="CHEBI:29108"/>
    </reaction>
</comment>
<comment type="activity regulation">
    <text evidence="2">Inositol 1,4,5-trisphosphate-gated calcium channel is regulated by cytosolic calcium in a biphasic manner. At low concentrations, cytosolic calcium binds at a high-affinity juxtamembrane domain (JD) calcium binding site, allowing ITPR3 to activate by escaping a low-energy resting state through an ensemble of preactivated states. At high cytosolic calcium concentrations, ITPR3 preferentially enters an inhibited state stabilized by calcium binding at a second, low-affinity cytoplasmic domain (CD) calcium binding site.</text>
</comment>
<comment type="subunit">
    <text evidence="1 2 3 7 8 9 10">Homotetramer (By similarity). Homodimer (By similarity). Interacts with TRPC1 and TRPC3 (By similarity). Interacts with TRPC4 (PubMed:11163362). Interacts with TRPV4 (By similarity). Interacts with SIGMAR1 (PubMed:11149946). Interacts with AKT1 and PML. Interacts with IRAG2 (via coiled-coil domain) (By similarity). Interacts with CABP1 (PubMed:12032348). Interacts with TMBIM4/LFG4 (By similarity). Interacts with CEMIP (By similarity). Interacts with TESPA1 (By similarity). Interacts with TMEM203 (By similarity). Interacts with BOK; regulates ITPR3 expression (PubMed:23884412). Interacts with BCL2L10 (By similarity). Interacts with CHGA and CHGB (By similarity).</text>
</comment>
<comment type="subcellular location">
    <subcellularLocation>
        <location evidence="11">Endoplasmic reticulum membrane</location>
        <topology evidence="4">Multi-pass membrane protein</topology>
    </subcellularLocation>
    <subcellularLocation>
        <location evidence="3">Cytoplasmic vesicle</location>
        <location evidence="3">Secretory vesicle membrane</location>
        <topology evidence="4">Multi-pass membrane protein</topology>
    </subcellularLocation>
    <text evidence="1">Also localizes at mitochondria-associated membranes (MAMs).</text>
</comment>
<comment type="domain">
    <text evidence="2">Composed of a large N-terminal cytoplasmic domain (CD) followed by a juxtamembrane domain (JD) and a transmembrane domain (TMD).</text>
</comment>
<comment type="PTM">
    <text evidence="1">Phosphorylated by AKT1 on serine and/or threonine residues (By similarity).</text>
</comment>
<comment type="similarity">
    <text evidence="13">Belongs to the InsP3 receptor family.</text>
</comment>
<gene>
    <name evidence="14" type="primary">Itpr3</name>
</gene>
<proteinExistence type="evidence at protein level"/>
<name>ITPR3_RAT</name>
<reference key="1">
    <citation type="journal article" date="1993" name="J. Biol. Chem.">
        <title>Sequence and functional characterization of a third inositol trisphosphate receptor subtype, IP3R-3, expressed in pancreatic islets, kidney, gastrointestinal tract, and other tissues.</title>
        <authorList>
            <person name="Blondel O."/>
            <person name="Takeda J."/>
            <person name="Janssen H."/>
            <person name="Seino S."/>
            <person name="Bell G.I."/>
        </authorList>
    </citation>
    <scope>NUCLEOTIDE SEQUENCE [MRNA]</scope>
    <scope>SUBCELLULAR LOCATION</scope>
</reference>
<reference key="2">
    <citation type="journal article" date="2001" name="FEBS Lett.">
        <title>Alternative splice variants of hTrp4 differentially interact with the C-terminal portion of the inositol 1,4,5-trisphosphate receptors.</title>
        <authorList>
            <person name="Mery L."/>
            <person name="Magnino F."/>
            <person name="Schmidt K."/>
            <person name="Krause K.-H."/>
            <person name="Dufour J.-F."/>
        </authorList>
    </citation>
    <scope>INTERACTION WITH TRPC4</scope>
</reference>
<reference key="3">
    <citation type="journal article" date="2001" name="Proc. Natl. Acad. Sci. U.S.A.">
        <title>Regulating ankyrin dynamics: roles of sigma-1 receptors.</title>
        <authorList>
            <person name="Hayashi T."/>
            <person name="Su T.-P."/>
        </authorList>
    </citation>
    <scope>INTERACTION WITH SIGMAR1</scope>
</reference>
<reference key="4">
    <citation type="journal article" date="2002" name="Proc. Natl. Acad. Sci. U.S.A.">
        <title>Identification of a family of calcium sensors as protein ligands of inositol trisphosphate receptor Ca(2+) release channels.</title>
        <authorList>
            <person name="Yang J."/>
            <person name="McBride S."/>
            <person name="Mak D.-O.D."/>
            <person name="Vardi N."/>
            <person name="Palczewski K."/>
            <person name="Haeseleer F."/>
            <person name="Foskett J.K."/>
        </authorList>
    </citation>
    <scope>INTERACTION WITH CABP1</scope>
</reference>
<reference key="5">
    <citation type="journal article" date="2012" name="Nat. Commun.">
        <title>Quantitative maps of protein phosphorylation sites across 14 different rat organs and tissues.</title>
        <authorList>
            <person name="Lundby A."/>
            <person name="Secher A."/>
            <person name="Lage K."/>
            <person name="Nordsborg N.B."/>
            <person name="Dmytriyev A."/>
            <person name="Lundby C."/>
            <person name="Olsen J.V."/>
        </authorList>
    </citation>
    <scope>PHOSPHORYLATION [LARGE SCALE ANALYSIS] AT SER-934 AND SER-2669</scope>
    <scope>IDENTIFICATION BY MASS SPECTROMETRY [LARGE SCALE ANALYSIS]</scope>
</reference>
<reference key="6">
    <citation type="journal article" date="2013" name="J. Biol. Chem.">
        <title>The Bcl-2 protein family member Bok binds to the coupling domain of inositol 1,4,5-trisphosphate receptors and protects them from proteolytic cleavage.</title>
        <authorList>
            <person name="Schulman J.J."/>
            <person name="Wright F.A."/>
            <person name="Kaufmann T."/>
            <person name="Wojcikiewicz R.J."/>
        </authorList>
    </citation>
    <scope>INTERACTION WITH BOK</scope>
</reference>
<keyword id="KW-0067">ATP-binding</keyword>
<keyword id="KW-0106">Calcium</keyword>
<keyword id="KW-0107">Calcium channel</keyword>
<keyword id="KW-0109">Calcium transport</keyword>
<keyword id="KW-0968">Cytoplasmic vesicle</keyword>
<keyword id="KW-1015">Disulfide bond</keyword>
<keyword id="KW-0256">Endoplasmic reticulum</keyword>
<keyword id="KW-0407">Ion channel</keyword>
<keyword id="KW-0406">Ion transport</keyword>
<keyword id="KW-1071">Ligand-gated ion channel</keyword>
<keyword id="KW-0472">Membrane</keyword>
<keyword id="KW-0479">Metal-binding</keyword>
<keyword id="KW-0547">Nucleotide-binding</keyword>
<keyword id="KW-0597">Phosphoprotein</keyword>
<keyword id="KW-0675">Receptor</keyword>
<keyword id="KW-1185">Reference proteome</keyword>
<keyword id="KW-0677">Repeat</keyword>
<keyword id="KW-0812">Transmembrane</keyword>
<keyword id="KW-1133">Transmembrane helix</keyword>
<keyword id="KW-0813">Transport</keyword>
<keyword id="KW-0862">Zinc</keyword>
<evidence type="ECO:0000250" key="1">
    <source>
        <dbReference type="UniProtKB" id="P70227"/>
    </source>
</evidence>
<evidence type="ECO:0000250" key="2">
    <source>
        <dbReference type="UniProtKB" id="Q14573"/>
    </source>
</evidence>
<evidence type="ECO:0000250" key="3">
    <source>
        <dbReference type="UniProtKB" id="Q8WN95"/>
    </source>
</evidence>
<evidence type="ECO:0000255" key="4"/>
<evidence type="ECO:0000255" key="5">
    <source>
        <dbReference type="PROSITE-ProRule" id="PRU00131"/>
    </source>
</evidence>
<evidence type="ECO:0000256" key="6">
    <source>
        <dbReference type="SAM" id="MobiDB-lite"/>
    </source>
</evidence>
<evidence type="ECO:0000269" key="7">
    <source>
    </source>
</evidence>
<evidence type="ECO:0000269" key="8">
    <source>
    </source>
</evidence>
<evidence type="ECO:0000269" key="9">
    <source>
    </source>
</evidence>
<evidence type="ECO:0000269" key="10">
    <source>
    </source>
</evidence>
<evidence type="ECO:0000269" key="11">
    <source>
    </source>
</evidence>
<evidence type="ECO:0000303" key="12">
    <source>
    </source>
</evidence>
<evidence type="ECO:0000305" key="13"/>
<evidence type="ECO:0000312" key="14">
    <source>
        <dbReference type="RGD" id="2934"/>
    </source>
</evidence>
<evidence type="ECO:0007744" key="15">
    <source>
    </source>
</evidence>
<sequence length="2670" mass="304286">MNEMSSFLHIGDIVSLYAEGSVNGFISTLGLVDDRCVVEPAAGDLDNPPKKFRDCLFKVCPMNRYSAQKQYWKAKQTKQDKEKIADVVLLQKLQHAAQMEQKQNDTENKKVHGDVVKYGSVIQLLHMKSNKYLTVNKRLPALLEKNAMRVTLDATGNEGSWLFIQPFWKLRSNGDNVVVGDKVILNPVNAGQPLHASNYELSDNVGCKEVNSVNCNTSWKINLFMQFRDHLEEVLKGGDVVRLFHAEQEKFLTCDEYRGKLQVFLRTTLRQSATSATSSNALWEVEVVHHDPCRGGAGHWNGLYRFKHLATGNYLAAEENPSYKGDVSDPKAAGPGAQSRTGRRNAGEKIKYRLVAVPHGNDIASLFELDPTTLQKTDSFVPRNSYVRLRHLCTNTWIQSTNAPIDVEEERPIRLMLGTCPTKEDKEAFAIVSVPVSEIRDLDFANDASSMLASAVEKLNEGFISQNDRRFVIQLLEDLVFFVSDVPNNGQNVLDIMVTKPNRERQKLMRDENILKQIFGILKAPFRDKGGEGPLVRLEELSDQKNAPYQYMFRLCYRVLRHSQEDYRKNQEHIAKQFGMMQSQIGYDILAEDTITALLHNNRKLLEKHITKTEVETFVSLVRKNREPRFLDYLSDLCVSNRIAIPVTQELICKCVLDPKNSDILIQTELRPVKEMAQSHEYLSIEYSEEEVWLTWTDRNNEHHEKSVRQLAQEARAGNAHDENVLSYYRYQLKLFARMCLDRQYLAIDEISKQLGVELLFLCMADEMLPFDLRASFCHLMLHVHVDRDPQELVTPVKFARLWTEIPTAITIKDYDSNLNASRDDKKNKFASTMEFVEDYLNNVVGEAVPFANDEKNILTFEVVSLAHNLIYFGFYSFSELLRLTRTLLGIIDCIQAPAAVLQAYEEPGGKNVRRSIQGVGHMMSTMVLSRKQSVFGASSLPTGVGVPEQLDRSKFEDNEHTVVMETKLKILEILQFILNVRLDYRISYLLSVFKKEFVEVFPMQDSGADGTAPAFDSSTANMNLDRIGEQAEAMFGVGKTSSMLEVDDEGGRMFLRVLLHLTMHDYPPLVSGALQLLFKHFSQRQEAMHTFKQVQLLISAQDVENYKVIKSELDRLRTMVEKSELWVDKKGSVKGEEGEAGASKDKKERPSDEEGFLQPHGEKSSENYQIVKGILERLNKMCGVGEQMRKKQQRLLKNMDAHKVMLDLLQIPYDKNDNKMMEILRYTHQFLQKFCAGNPGNQALLHKHLQLFLTPGLLEAETMQHIFLNNYQLCSEISEPVLQHFVHCWPTHGRHVQYLDFLHTVIKAEGKYVKKCQDMIMTELTNAGDDVVVFYNDKASLAHLLDMMKAARDGVEDHSPLMYHISLVDLLAACAEGKNVYTEIKCTSLLPLEDVVSVVTHEDCITEVKMAYVNFVNHCYVDTEVEMKEIYTSNHIWTLFENFTLDMALVCNKREKRLSDPTLEKYVLTVVLDTISAFFSSPFSENSTSLQTHQTIVVQLLQSTTRLLECPWLQQQHKGSVEACVRTLAMVAKSRAILLPMDLDAHMSALLSSGGSCSAAAQRSAANYKTATRTFPRVIPTANQWDYKNIIEKLQDIITALEERLKPLVQAELSVLVDMLHWPELLFLEGSEAYQRCESGGFLSKLIRHTKGLMESEEKLCVKVLRTLQQMLQKKSKYGDRGNQLRKMLLQNYLQNRKSGPRGELTDPTGSGVDQDWSAIAATQCRLDKEGATKLVCDLITSTKNEKIFQESIGLAIRLLDGGNTEIQKSFYNLMTSDKKSERFFKVLHDRMKRAQQETKSTVAVNMSDLGSQPREDREPADPTTKGRVSSFSMPSSSRYSLGPGLHRGHDVSERAQNNEMGTSVLIMRPILRFLQLLCENHNRDLQNFLRCQNNKTNYNLVCETLQFLDIMCGSTTGGLGLLGLYINEDNVGLVIQTLETLTEYCQGPCHENQTCIVTHESNGIDIITALILNDISPLCKYRMDLVLQLKDNASKLLLALMESRHDSENAERILISLRPQELVDVIKKAYLQEEERENSEVSPREVGHNIYILALQLSRHNKQLQHLLKPVKRIQEEEAEGISSMLSLNNKQLSQMLKSSAPAQEEEEDPLAYYENHTSQIEIVRQDRSMEQIVFPVPAICQFLTEETKHRLFTTTEQDEQGSKVSDFFDQSSFLHNEMEWQRRLRSMPLIYWFSRRMTLWGSISFNLAVFINIIIAFFYPYVEGASTGVLGSPLISLLFWILICFSIAALFTKHYSVRPLIVALVLRSIYYLGIGPTLNILGALNLTNKIVFVVSFVGNRGTFIRGYKAMVMDMEFLYHVGYILTSVLGLFAHELFYSILLFDLIYREETLFNVIKSVTRNGRSILLTALLALILVYLFSIVGFLFLKDDFILEVDRLPGNHSRASTLGMPHGAATFMGTCSGDKMDCVSEVSVPEILEEDEELDSTERACDTLLMCIVTVMNHGLRNGGGVGDILRKPSKDESLFPARVVYDLLFFFIVIIIVLNLIFGVIIDTFADLRSEKQKKEEILKTTCFICGLERDKFDNKTVSFEEHIKLEHNMWNYLYFIVLVRVKNKTDYTGPESYVAQMIKNKNLDWFPRMRAMSLVSGEGEGEQNEIRILQEKLGSTMKLVSHLTAQLNELKEQMTEQRKRRQRLGFVDVQNCMSR</sequence>
<protein>
    <recommendedName>
        <fullName evidence="13">Inositol 1,4,5-trisphosphate-gated calcium channel ITPR3</fullName>
    </recommendedName>
    <alternativeName>
        <fullName>IP3 receptor isoform 3</fullName>
        <shortName evidence="12">IP3R-3</shortName>
        <shortName>InsP3R3</shortName>
    </alternativeName>
    <alternativeName>
        <fullName>Inositol 1,4,5-trisphosphate receptor type 3</fullName>
    </alternativeName>
    <alternativeName>
        <fullName>Type 3 inositol 1,4,5-trisphosphate receptor</fullName>
        <shortName>Type 3 InsP3 receptor</shortName>
    </alternativeName>
</protein>
<accession>Q63269</accession>
<dbReference type="EMBL" id="L06096">
    <property type="protein sequence ID" value="AAA41446.1"/>
    <property type="molecule type" value="mRNA"/>
</dbReference>
<dbReference type="PIR" id="A46719">
    <property type="entry name" value="A46719"/>
</dbReference>
<dbReference type="RefSeq" id="NP_037270.1">
    <property type="nucleotide sequence ID" value="NM_013138.1"/>
</dbReference>
<dbReference type="SMR" id="Q63269"/>
<dbReference type="BioGRID" id="247708">
    <property type="interactions" value="3"/>
</dbReference>
<dbReference type="FunCoup" id="Q63269">
    <property type="interactions" value="937"/>
</dbReference>
<dbReference type="IntAct" id="Q63269">
    <property type="interactions" value="3"/>
</dbReference>
<dbReference type="MINT" id="Q63269"/>
<dbReference type="STRING" id="10116.ENSRNOP00000075066"/>
<dbReference type="ChEMBL" id="CHEMBL2846"/>
<dbReference type="TCDB" id="1.A.3.2.5">
    <property type="family name" value="the ryanodine-inositol 1,4,5-triphosphate receptor ca(2+) channel (rir-cac) family"/>
</dbReference>
<dbReference type="CarbonylDB" id="Q63269"/>
<dbReference type="GlyGen" id="Q63269">
    <property type="glycosylation" value="1 site, 1 O-linked glycan (1 site)"/>
</dbReference>
<dbReference type="iPTMnet" id="Q63269"/>
<dbReference type="PhosphoSitePlus" id="Q63269"/>
<dbReference type="jPOST" id="Q63269"/>
<dbReference type="PaxDb" id="10116-ENSRNOP00000011516"/>
<dbReference type="GeneID" id="25679"/>
<dbReference type="KEGG" id="rno:25679"/>
<dbReference type="UCSC" id="RGD:2934">
    <property type="organism name" value="rat"/>
</dbReference>
<dbReference type="AGR" id="RGD:2934"/>
<dbReference type="CTD" id="3710"/>
<dbReference type="RGD" id="2934">
    <property type="gene designation" value="Itpr3"/>
</dbReference>
<dbReference type="eggNOG" id="KOG3533">
    <property type="taxonomic scope" value="Eukaryota"/>
</dbReference>
<dbReference type="InParanoid" id="Q63269"/>
<dbReference type="PhylomeDB" id="Q63269"/>
<dbReference type="Reactome" id="R-RNO-114508">
    <property type="pathway name" value="Effects of PIP2 hydrolysis"/>
</dbReference>
<dbReference type="Reactome" id="R-RNO-139853">
    <property type="pathway name" value="Elevation of cytosolic Ca2+ levels"/>
</dbReference>
<dbReference type="Reactome" id="R-RNO-381676">
    <property type="pathway name" value="Glucagon-like Peptide-1 (GLP1) regulates insulin secretion"/>
</dbReference>
<dbReference type="Reactome" id="R-RNO-5578775">
    <property type="pathway name" value="Ion homeostasis"/>
</dbReference>
<dbReference type="Reactome" id="R-RNO-9717207">
    <property type="pathway name" value="Sensory perception of sweet, bitter, and umami (glutamate) taste"/>
</dbReference>
<dbReference type="Reactome" id="R-RNO-983695">
    <property type="pathway name" value="Antigen activates B Cell Receptor (BCR) leading to generation of second messengers"/>
</dbReference>
<dbReference type="PRO" id="PR:Q63269"/>
<dbReference type="Proteomes" id="UP000002494">
    <property type="component" value="Unplaced"/>
</dbReference>
<dbReference type="GO" id="GO:0045177">
    <property type="term" value="C:apical part of cell"/>
    <property type="evidence" value="ECO:0000314"/>
    <property type="project" value="BHF-UCL"/>
</dbReference>
<dbReference type="GO" id="GO:0016324">
    <property type="term" value="C:apical plasma membrane"/>
    <property type="evidence" value="ECO:0000314"/>
    <property type="project" value="RGD"/>
</dbReference>
<dbReference type="GO" id="GO:0005903">
    <property type="term" value="C:brush border"/>
    <property type="evidence" value="ECO:0000314"/>
    <property type="project" value="BHF-UCL"/>
</dbReference>
<dbReference type="GO" id="GO:0005737">
    <property type="term" value="C:cytoplasm"/>
    <property type="evidence" value="ECO:0000266"/>
    <property type="project" value="RGD"/>
</dbReference>
<dbReference type="GO" id="GO:0098554">
    <property type="term" value="C:cytoplasmic side of endoplasmic reticulum membrane"/>
    <property type="evidence" value="ECO:0000266"/>
    <property type="project" value="RGD"/>
</dbReference>
<dbReference type="GO" id="GO:0030425">
    <property type="term" value="C:dendrite"/>
    <property type="evidence" value="ECO:0000314"/>
    <property type="project" value="RGD"/>
</dbReference>
<dbReference type="GO" id="GO:0005783">
    <property type="term" value="C:endoplasmic reticulum"/>
    <property type="evidence" value="ECO:0000314"/>
    <property type="project" value="BHF-UCL"/>
</dbReference>
<dbReference type="GO" id="GO:0005789">
    <property type="term" value="C:endoplasmic reticulum membrane"/>
    <property type="evidence" value="ECO:0000314"/>
    <property type="project" value="RGD"/>
</dbReference>
<dbReference type="GO" id="GO:0043025">
    <property type="term" value="C:neuronal cell body"/>
    <property type="evidence" value="ECO:0000314"/>
    <property type="project" value="RGD"/>
</dbReference>
<dbReference type="GO" id="GO:0005635">
    <property type="term" value="C:nuclear envelope"/>
    <property type="evidence" value="ECO:0000314"/>
    <property type="project" value="RGD"/>
</dbReference>
<dbReference type="GO" id="GO:0005640">
    <property type="term" value="C:nuclear outer membrane"/>
    <property type="evidence" value="ECO:0000314"/>
    <property type="project" value="RGD"/>
</dbReference>
<dbReference type="GO" id="GO:0005730">
    <property type="term" value="C:nucleolus"/>
    <property type="evidence" value="ECO:0000266"/>
    <property type="project" value="RGD"/>
</dbReference>
<dbReference type="GO" id="GO:0005654">
    <property type="term" value="C:nucleoplasm"/>
    <property type="evidence" value="ECO:0000266"/>
    <property type="project" value="RGD"/>
</dbReference>
<dbReference type="GO" id="GO:0005634">
    <property type="term" value="C:nucleus"/>
    <property type="evidence" value="ECO:0000266"/>
    <property type="project" value="RGD"/>
</dbReference>
<dbReference type="GO" id="GO:0048471">
    <property type="term" value="C:perinuclear region of cytoplasm"/>
    <property type="evidence" value="ECO:0000314"/>
    <property type="project" value="RGD"/>
</dbReference>
<dbReference type="GO" id="GO:0005886">
    <property type="term" value="C:plasma membrane"/>
    <property type="evidence" value="ECO:0000266"/>
    <property type="project" value="RGD"/>
</dbReference>
<dbReference type="GO" id="GO:0098793">
    <property type="term" value="C:presynapse"/>
    <property type="evidence" value="ECO:0000314"/>
    <property type="project" value="SynGO"/>
</dbReference>
<dbReference type="GO" id="GO:0043235">
    <property type="term" value="C:receptor complex"/>
    <property type="evidence" value="ECO:0000266"/>
    <property type="project" value="RGD"/>
</dbReference>
<dbReference type="GO" id="GO:0016529">
    <property type="term" value="C:sarcoplasmic reticulum"/>
    <property type="evidence" value="ECO:0000318"/>
    <property type="project" value="GO_Central"/>
</dbReference>
<dbReference type="GO" id="GO:0030667">
    <property type="term" value="C:secretory granule membrane"/>
    <property type="evidence" value="ECO:0000318"/>
    <property type="project" value="GO_Central"/>
</dbReference>
<dbReference type="GO" id="GO:0030658">
    <property type="term" value="C:transport vesicle membrane"/>
    <property type="evidence" value="ECO:0007669"/>
    <property type="project" value="UniProtKB-SubCell"/>
</dbReference>
<dbReference type="GO" id="GO:0005524">
    <property type="term" value="F:ATP binding"/>
    <property type="evidence" value="ECO:0000250"/>
    <property type="project" value="UniProtKB"/>
</dbReference>
<dbReference type="GO" id="GO:0005509">
    <property type="term" value="F:calcium ion binding"/>
    <property type="evidence" value="ECO:0000314"/>
    <property type="project" value="RGD"/>
</dbReference>
<dbReference type="GO" id="GO:0015085">
    <property type="term" value="F:calcium ion transmembrane transporter activity"/>
    <property type="evidence" value="ECO:0000304"/>
    <property type="project" value="RGD"/>
</dbReference>
<dbReference type="GO" id="GO:0042802">
    <property type="term" value="F:identical protein binding"/>
    <property type="evidence" value="ECO:0000353"/>
    <property type="project" value="RGD"/>
</dbReference>
<dbReference type="GO" id="GO:0043533">
    <property type="term" value="F:inositol 1,3,4,5 tetrakisphosphate binding"/>
    <property type="evidence" value="ECO:0000314"/>
    <property type="project" value="RGD"/>
</dbReference>
<dbReference type="GO" id="GO:0070679">
    <property type="term" value="F:inositol 1,4,5 trisphosphate binding"/>
    <property type="evidence" value="ECO:0000314"/>
    <property type="project" value="RGD"/>
</dbReference>
<dbReference type="GO" id="GO:0005220">
    <property type="term" value="F:inositol 1,4,5-trisphosphate-gated calcium channel activity"/>
    <property type="evidence" value="ECO:0000314"/>
    <property type="project" value="RGD"/>
</dbReference>
<dbReference type="GO" id="GO:0000822">
    <property type="term" value="F:inositol hexakisphosphate binding"/>
    <property type="evidence" value="ECO:0000314"/>
    <property type="project" value="RGD"/>
</dbReference>
<dbReference type="GO" id="GO:0015278">
    <property type="term" value="F:intracellularly gated calcium channel activity"/>
    <property type="evidence" value="ECO:0000250"/>
    <property type="project" value="UniProtKB"/>
</dbReference>
<dbReference type="GO" id="GO:0035091">
    <property type="term" value="F:phosphatidylinositol binding"/>
    <property type="evidence" value="ECO:0000266"/>
    <property type="project" value="RGD"/>
</dbReference>
<dbReference type="GO" id="GO:0044877">
    <property type="term" value="F:protein-containing complex binding"/>
    <property type="evidence" value="ECO:0000314"/>
    <property type="project" value="RGD"/>
</dbReference>
<dbReference type="GO" id="GO:0008270">
    <property type="term" value="F:zinc ion binding"/>
    <property type="evidence" value="ECO:0000250"/>
    <property type="project" value="UniProtKB"/>
</dbReference>
<dbReference type="GO" id="GO:0055074">
    <property type="term" value="P:calcium ion homeostasis"/>
    <property type="evidence" value="ECO:0000250"/>
    <property type="project" value="UniProtKB"/>
</dbReference>
<dbReference type="GO" id="GO:0006816">
    <property type="term" value="P:calcium ion transport"/>
    <property type="evidence" value="ECO:0000266"/>
    <property type="project" value="RGD"/>
</dbReference>
<dbReference type="GO" id="GO:0071320">
    <property type="term" value="P:cellular response to cAMP"/>
    <property type="evidence" value="ECO:0000314"/>
    <property type="project" value="RGD"/>
</dbReference>
<dbReference type="GO" id="GO:0007186">
    <property type="term" value="P:G protein-coupled receptor signaling pathway"/>
    <property type="evidence" value="ECO:0000314"/>
    <property type="project" value="RGD"/>
</dbReference>
<dbReference type="GO" id="GO:0060291">
    <property type="term" value="P:long-term synaptic potentiation"/>
    <property type="evidence" value="ECO:0000266"/>
    <property type="project" value="RGD"/>
</dbReference>
<dbReference type="GO" id="GO:0007613">
    <property type="term" value="P:memory"/>
    <property type="evidence" value="ECO:0000266"/>
    <property type="project" value="RGD"/>
</dbReference>
<dbReference type="GO" id="GO:0030168">
    <property type="term" value="P:platelet activation"/>
    <property type="evidence" value="ECO:0000266"/>
    <property type="project" value="RGD"/>
</dbReference>
<dbReference type="GO" id="GO:0007204">
    <property type="term" value="P:positive regulation of cytosolic calcium ion concentration"/>
    <property type="evidence" value="ECO:0000314"/>
    <property type="project" value="RGD"/>
</dbReference>
<dbReference type="GO" id="GO:0051289">
    <property type="term" value="P:protein homotetramerization"/>
    <property type="evidence" value="ECO:0000250"/>
    <property type="project" value="UniProtKB"/>
</dbReference>
<dbReference type="GO" id="GO:0051209">
    <property type="term" value="P:release of sequestered calcium ion into cytosol"/>
    <property type="evidence" value="ECO:0000266"/>
    <property type="project" value="RGD"/>
</dbReference>
<dbReference type="GO" id="GO:0051592">
    <property type="term" value="P:response to calcium ion"/>
    <property type="evidence" value="ECO:0000266"/>
    <property type="project" value="RGD"/>
</dbReference>
<dbReference type="GO" id="GO:0050913">
    <property type="term" value="P:sensory perception of bitter taste"/>
    <property type="evidence" value="ECO:0000266"/>
    <property type="project" value="RGD"/>
</dbReference>
<dbReference type="GO" id="GO:0050916">
    <property type="term" value="P:sensory perception of sweet taste"/>
    <property type="evidence" value="ECO:0000266"/>
    <property type="project" value="RGD"/>
</dbReference>
<dbReference type="GO" id="GO:0050917">
    <property type="term" value="P:sensory perception of umami taste"/>
    <property type="evidence" value="ECO:0000266"/>
    <property type="project" value="RGD"/>
</dbReference>
<dbReference type="CDD" id="cd23289">
    <property type="entry name" value="beta-trefoil_MIR_ITPR3"/>
    <property type="match status" value="1"/>
</dbReference>
<dbReference type="FunFam" id="2.80.10.50:FF:000002">
    <property type="entry name" value="Inositol 1,4,5-trisphosphate receptor type 2"/>
    <property type="match status" value="1"/>
</dbReference>
<dbReference type="FunFam" id="2.80.10.50:FF:000028">
    <property type="entry name" value="Inositol 1,4,5-trisphosphate receptor type 3"/>
    <property type="match status" value="1"/>
</dbReference>
<dbReference type="FunFam" id="1.25.10.30:FF:000001">
    <property type="entry name" value="Inositol 1,4,5-trisphosphate receptor, type 2"/>
    <property type="match status" value="1"/>
</dbReference>
<dbReference type="Gene3D" id="1.10.287.70">
    <property type="match status" value="1"/>
</dbReference>
<dbReference type="Gene3D" id="2.80.10.50">
    <property type="match status" value="2"/>
</dbReference>
<dbReference type="Gene3D" id="1.25.10.30">
    <property type="entry name" value="IP3 receptor type 1 binding core, RIH domain"/>
    <property type="match status" value="1"/>
</dbReference>
<dbReference type="InterPro" id="IPR014821">
    <property type="entry name" value="Ins145_P3_rcpt"/>
</dbReference>
<dbReference type="InterPro" id="IPR000493">
    <property type="entry name" value="InsP3_rcpt"/>
</dbReference>
<dbReference type="InterPro" id="IPR005821">
    <property type="entry name" value="Ion_trans_dom"/>
</dbReference>
<dbReference type="InterPro" id="IPR036300">
    <property type="entry name" value="MIR_dom_sf"/>
</dbReference>
<dbReference type="InterPro" id="IPR016093">
    <property type="entry name" value="MIR_motif"/>
</dbReference>
<dbReference type="InterPro" id="IPR013662">
    <property type="entry name" value="RIH_assoc-dom"/>
</dbReference>
<dbReference type="InterPro" id="IPR000699">
    <property type="entry name" value="RIH_dom"/>
</dbReference>
<dbReference type="InterPro" id="IPR015925">
    <property type="entry name" value="Ryanodine_IP3_receptor"/>
</dbReference>
<dbReference type="InterPro" id="IPR035910">
    <property type="entry name" value="RyR/IP3R_RIH_dom_sf"/>
</dbReference>
<dbReference type="PANTHER" id="PTHR45816:SF1">
    <property type="entry name" value="INOSITOL 1,4,5-TRISPHOSPHATE RECEPTOR"/>
    <property type="match status" value="1"/>
</dbReference>
<dbReference type="PANTHER" id="PTHR45816">
    <property type="entry name" value="MIR DOMAIN-CONTAINING PROTEIN"/>
    <property type="match status" value="1"/>
</dbReference>
<dbReference type="Pfam" id="PF08709">
    <property type="entry name" value="Ins145_P3_rec"/>
    <property type="match status" value="1"/>
</dbReference>
<dbReference type="Pfam" id="PF00520">
    <property type="entry name" value="Ion_trans"/>
    <property type="match status" value="1"/>
</dbReference>
<dbReference type="Pfam" id="PF02815">
    <property type="entry name" value="MIR"/>
    <property type="match status" value="1"/>
</dbReference>
<dbReference type="Pfam" id="PF08454">
    <property type="entry name" value="RIH_assoc"/>
    <property type="match status" value="1"/>
</dbReference>
<dbReference type="Pfam" id="PF01365">
    <property type="entry name" value="RYDR_ITPR"/>
    <property type="match status" value="2"/>
</dbReference>
<dbReference type="PRINTS" id="PR00779">
    <property type="entry name" value="INSP3RECEPTR"/>
</dbReference>
<dbReference type="SMART" id="SM00472">
    <property type="entry name" value="MIR"/>
    <property type="match status" value="4"/>
</dbReference>
<dbReference type="SUPFAM" id="SSF100909">
    <property type="entry name" value="IP3 receptor type 1 binding core, domain 2"/>
    <property type="match status" value="2"/>
</dbReference>
<dbReference type="SUPFAM" id="SSF82109">
    <property type="entry name" value="MIR domain"/>
    <property type="match status" value="2"/>
</dbReference>
<dbReference type="PROSITE" id="PS50919">
    <property type="entry name" value="MIR"/>
    <property type="match status" value="5"/>
</dbReference>
<organism>
    <name type="scientific">Rattus norvegicus</name>
    <name type="common">Rat</name>
    <dbReference type="NCBI Taxonomy" id="10116"/>
    <lineage>
        <taxon>Eukaryota</taxon>
        <taxon>Metazoa</taxon>
        <taxon>Chordata</taxon>
        <taxon>Craniata</taxon>
        <taxon>Vertebrata</taxon>
        <taxon>Euteleostomi</taxon>
        <taxon>Mammalia</taxon>
        <taxon>Eutheria</taxon>
        <taxon>Euarchontoglires</taxon>
        <taxon>Glires</taxon>
        <taxon>Rodentia</taxon>
        <taxon>Myomorpha</taxon>
        <taxon>Muroidea</taxon>
        <taxon>Muridae</taxon>
        <taxon>Murinae</taxon>
        <taxon>Rattus</taxon>
    </lineage>
</organism>
<feature type="chain" id="PRO_0000153930" description="Inositol 1,4,5-trisphosphate-gated calcium channel ITPR3">
    <location>
        <begin position="1"/>
        <end position="2670"/>
    </location>
</feature>
<feature type="topological domain" description="Cytoplasmic" evidence="4">
    <location>
        <begin position="1"/>
        <end position="2201"/>
    </location>
</feature>
<feature type="transmembrane region" description="Helical" evidence="4">
    <location>
        <begin position="2202"/>
        <end position="2222"/>
    </location>
</feature>
<feature type="topological domain" description="Extracellular" evidence="4">
    <location>
        <begin position="2223"/>
        <end position="2233"/>
    </location>
</feature>
<feature type="transmembrane region" description="Helical" evidence="4">
    <location>
        <begin position="2234"/>
        <end position="2254"/>
    </location>
</feature>
<feature type="topological domain" description="Cytoplasmic" evidence="4">
    <location>
        <begin position="2255"/>
        <end position="2263"/>
    </location>
</feature>
<feature type="transmembrane region" description="Helical" evidence="4">
    <location>
        <begin position="2264"/>
        <end position="2284"/>
    </location>
</feature>
<feature type="topological domain" description="Extracellular" evidence="4">
    <location>
        <begin position="2285"/>
        <end position="2324"/>
    </location>
</feature>
<feature type="transmembrane region" description="Helical" evidence="4">
    <location>
        <begin position="2325"/>
        <end position="2345"/>
    </location>
</feature>
<feature type="topological domain" description="Cytoplasmic" evidence="4">
    <location>
        <begin position="2346"/>
        <end position="2367"/>
    </location>
</feature>
<feature type="transmembrane region" description="Helical" evidence="4">
    <location>
        <begin position="2368"/>
        <end position="2388"/>
    </location>
</feature>
<feature type="topological domain" description="Extracellular" evidence="4">
    <location>
        <begin position="2389"/>
        <end position="2495"/>
    </location>
</feature>
<feature type="transmembrane region" description="Helical" evidence="4">
    <location>
        <begin position="2496"/>
        <end position="2516"/>
    </location>
</feature>
<feature type="topological domain" description="Cytoplasmic" evidence="4">
    <location>
        <begin position="2517"/>
        <end position="2670"/>
    </location>
</feature>
<feature type="domain" description="MIR 1" evidence="5">
    <location>
        <begin position="113"/>
        <end position="173"/>
    </location>
</feature>
<feature type="domain" description="MIR 2" evidence="5">
    <location>
        <begin position="174"/>
        <end position="224"/>
    </location>
</feature>
<feature type="domain" description="MIR 3" evidence="5">
    <location>
        <begin position="232"/>
        <end position="288"/>
    </location>
</feature>
<feature type="domain" description="MIR 4" evidence="5">
    <location>
        <begin position="295"/>
        <end position="372"/>
    </location>
</feature>
<feature type="domain" description="MIR 5" evidence="5">
    <location>
        <begin position="378"/>
        <end position="434"/>
    </location>
</feature>
<feature type="region of interest" description="Disordered" evidence="6">
    <location>
        <begin position="321"/>
        <end position="344"/>
    </location>
</feature>
<feature type="region of interest" description="Disordered" evidence="6">
    <location>
        <begin position="1134"/>
        <end position="1164"/>
    </location>
</feature>
<feature type="region of interest" description="Disordered" evidence="6">
    <location>
        <begin position="1807"/>
        <end position="1849"/>
    </location>
</feature>
<feature type="compositionally biased region" description="Basic and acidic residues" evidence="6">
    <location>
        <begin position="1134"/>
        <end position="1153"/>
    </location>
</feature>
<feature type="compositionally biased region" description="Low complexity" evidence="6">
    <location>
        <begin position="1831"/>
        <end position="1842"/>
    </location>
</feature>
<feature type="binding site" evidence="2">
    <location>
        <position position="266"/>
    </location>
    <ligand>
        <name>1D-myo-inositol 1,4,5-trisphosphate</name>
        <dbReference type="ChEBI" id="CHEBI:203600"/>
    </ligand>
</feature>
<feature type="binding site" evidence="2">
    <location>
        <position position="268"/>
    </location>
    <ligand>
        <name>1D-myo-inositol 1,4,5-trisphosphate</name>
        <dbReference type="ChEBI" id="CHEBI:203600"/>
    </ligand>
</feature>
<feature type="binding site" evidence="2">
    <location>
        <position position="269"/>
    </location>
    <ligand>
        <name>1D-myo-inositol 1,4,5-trisphosphate</name>
        <dbReference type="ChEBI" id="CHEBI:203600"/>
    </ligand>
</feature>
<feature type="binding site" evidence="2">
    <location>
        <position position="270"/>
    </location>
    <ligand>
        <name>1D-myo-inositol 1,4,5-trisphosphate</name>
        <dbReference type="ChEBI" id="CHEBI:203600"/>
    </ligand>
</feature>
<feature type="binding site" evidence="2">
    <location>
        <position position="503"/>
    </location>
    <ligand>
        <name>1D-myo-inositol 1,4,5-trisphosphate</name>
        <dbReference type="ChEBI" id="CHEBI:203600"/>
    </ligand>
</feature>
<feature type="binding site" evidence="2">
    <location>
        <position position="507"/>
    </location>
    <ligand>
        <name>1D-myo-inositol 1,4,5-trisphosphate</name>
        <dbReference type="ChEBI" id="CHEBI:203600"/>
    </ligand>
</feature>
<feature type="binding site" evidence="2">
    <location>
        <position position="510"/>
    </location>
    <ligand>
        <name>1D-myo-inositol 1,4,5-trisphosphate</name>
        <dbReference type="ChEBI" id="CHEBI:203600"/>
    </ligand>
</feature>
<feature type="binding site" evidence="2">
    <location>
        <position position="567"/>
    </location>
    <ligand>
        <name>1D-myo-inositol 1,4,5-trisphosphate</name>
        <dbReference type="ChEBI" id="CHEBI:203600"/>
    </ligand>
</feature>
<feature type="binding site" evidence="2">
    <location>
        <position position="568"/>
    </location>
    <ligand>
        <name>1D-myo-inositol 1,4,5-trisphosphate</name>
        <dbReference type="ChEBI" id="CHEBI:203600"/>
    </ligand>
</feature>
<feature type="binding site" evidence="2">
    <location>
        <position position="569"/>
    </location>
    <ligand>
        <name>1D-myo-inositol 1,4,5-trisphosphate</name>
        <dbReference type="ChEBI" id="CHEBI:203600"/>
    </ligand>
</feature>
<feature type="binding site" evidence="2">
    <location>
        <position position="743"/>
    </location>
    <ligand>
        <name>Ca(2+)</name>
        <dbReference type="ChEBI" id="CHEBI:29108"/>
        <label>1</label>
        <note>low affinity</note>
    </ligand>
</feature>
<feature type="binding site" evidence="2">
    <location>
        <position position="1122"/>
    </location>
    <ligand>
        <name>Ca(2+)</name>
        <dbReference type="ChEBI" id="CHEBI:29108"/>
        <label>1</label>
        <note>low affinity</note>
    </ligand>
</feature>
<feature type="binding site" evidence="2">
    <location>
        <position position="1125"/>
    </location>
    <ligand>
        <name>Ca(2+)</name>
        <dbReference type="ChEBI" id="CHEBI:29108"/>
        <label>1</label>
        <note>low affinity</note>
    </ligand>
</feature>
<feature type="binding site" evidence="2">
    <location>
        <position position="1881"/>
    </location>
    <ligand>
        <name>Ca(2+)</name>
        <dbReference type="ChEBI" id="CHEBI:29108"/>
        <label>2</label>
        <note>high affinity</note>
    </ligand>
</feature>
<feature type="binding site" evidence="2">
    <location>
        <position position="1945"/>
    </location>
    <ligand>
        <name>Ca(2+)</name>
        <dbReference type="ChEBI" id="CHEBI:29108"/>
        <label>2</label>
        <note>high affinity</note>
    </ligand>
</feature>
<feature type="binding site" evidence="2">
    <location>
        <position position="1995"/>
    </location>
    <ligand>
        <name>ATP</name>
        <dbReference type="ChEBI" id="CHEBI:30616"/>
    </ligand>
</feature>
<feature type="binding site" evidence="2">
    <location>
        <position position="2148"/>
    </location>
    <ligand>
        <name>ATP</name>
        <dbReference type="ChEBI" id="CHEBI:30616"/>
    </ligand>
</feature>
<feature type="binding site" evidence="2">
    <location>
        <position position="2151"/>
    </location>
    <ligand>
        <name>ATP</name>
        <dbReference type="ChEBI" id="CHEBI:30616"/>
    </ligand>
</feature>
<feature type="binding site" evidence="2">
    <location>
        <position position="2537"/>
    </location>
    <ligand>
        <name>ATP</name>
        <dbReference type="ChEBI" id="CHEBI:30616"/>
    </ligand>
</feature>
<feature type="binding site" evidence="2">
    <location>
        <position position="2537"/>
    </location>
    <ligand>
        <name>Zn(2+)</name>
        <dbReference type="ChEBI" id="CHEBI:29105"/>
    </ligand>
</feature>
<feature type="binding site" evidence="2">
    <location>
        <position position="2538"/>
    </location>
    <ligand>
        <name>ATP</name>
        <dbReference type="ChEBI" id="CHEBI:30616"/>
    </ligand>
</feature>
<feature type="binding site" evidence="2">
    <location>
        <position position="2540"/>
    </location>
    <ligand>
        <name>Zn(2+)</name>
        <dbReference type="ChEBI" id="CHEBI:29105"/>
    </ligand>
</feature>
<feature type="binding site" evidence="2">
    <location>
        <position position="2557"/>
    </location>
    <ligand>
        <name>Zn(2+)</name>
        <dbReference type="ChEBI" id="CHEBI:29105"/>
    </ligand>
</feature>
<feature type="binding site" evidence="2">
    <location>
        <position position="2559"/>
    </location>
    <ligand>
        <name>ATP</name>
        <dbReference type="ChEBI" id="CHEBI:30616"/>
    </ligand>
</feature>
<feature type="binding site" evidence="2">
    <location>
        <position position="2562"/>
    </location>
    <ligand>
        <name>ATP</name>
        <dbReference type="ChEBI" id="CHEBI:30616"/>
    </ligand>
</feature>
<feature type="binding site" evidence="2">
    <location>
        <position position="2562"/>
    </location>
    <ligand>
        <name>Zn(2+)</name>
        <dbReference type="ChEBI" id="CHEBI:29105"/>
    </ligand>
</feature>
<feature type="binding site" evidence="2">
    <location>
        <position position="2563"/>
    </location>
    <ligand>
        <name>ATP</name>
        <dbReference type="ChEBI" id="CHEBI:30616"/>
    </ligand>
</feature>
<feature type="binding site" evidence="2">
    <location>
        <position position="2564"/>
    </location>
    <ligand>
        <name>ATP</name>
        <dbReference type="ChEBI" id="CHEBI:30616"/>
    </ligand>
</feature>
<feature type="binding site" evidence="2">
    <location>
        <position position="2580"/>
    </location>
    <ligand>
        <name>Ca(2+)</name>
        <dbReference type="ChEBI" id="CHEBI:29108"/>
        <label>2</label>
        <note>high affinity</note>
    </ligand>
</feature>
<feature type="modified residue" description="Phosphoserine" evidence="2">
    <location>
        <position position="916"/>
    </location>
</feature>
<feature type="modified residue" description="Phosphoserine" evidence="15">
    <location>
        <position position="934"/>
    </location>
</feature>
<feature type="modified residue" description="Phosphoserine" evidence="2">
    <location>
        <position position="1813"/>
    </location>
</feature>
<feature type="modified residue" description="Phosphoserine" evidence="2">
    <location>
        <position position="1832"/>
    </location>
</feature>
<feature type="modified residue" description="Phosphoserine" evidence="2">
    <location>
        <position position="1834"/>
    </location>
</feature>
<feature type="modified residue" description="Phosphoserine" evidence="2">
    <location>
        <position position="2608"/>
    </location>
</feature>
<feature type="modified residue" description="Phosphoserine" evidence="15">
    <location>
        <position position="2669"/>
    </location>
</feature>
<feature type="disulfide bond" evidence="2">
    <location>
        <begin position="2454"/>
        <end position="2460"/>
    </location>
</feature>